<name>TRPE_ECOLI</name>
<proteinExistence type="evidence at protein level"/>
<protein>
    <recommendedName>
        <fullName>Anthranilate synthase component 1</fullName>
        <shortName>AS</shortName>
        <shortName>ASI</shortName>
        <ecNumber>4.1.3.27</ecNumber>
    </recommendedName>
</protein>
<dbReference type="EC" id="4.1.3.27"/>
<dbReference type="EMBL" id="V00368">
    <property type="protein sequence ID" value="CAA23666.1"/>
    <property type="molecule type" value="Genomic_DNA"/>
</dbReference>
<dbReference type="EMBL" id="V00372">
    <property type="protein sequence ID" value="CAA23671.1"/>
    <property type="molecule type" value="Genomic_DNA"/>
</dbReference>
<dbReference type="EMBL" id="J01714">
    <property type="protein sequence ID" value="AAA57297.1"/>
    <property type="molecule type" value="Genomic_DNA"/>
</dbReference>
<dbReference type="EMBL" id="U00096">
    <property type="protein sequence ID" value="AAC74346.1"/>
    <property type="molecule type" value="Genomic_DNA"/>
</dbReference>
<dbReference type="EMBL" id="AP009048">
    <property type="protein sequence ID" value="BAA14799.1"/>
    <property type="molecule type" value="Genomic_DNA"/>
</dbReference>
<dbReference type="EMBL" id="M24959">
    <property type="protein sequence ID" value="AAA24692.1"/>
    <property type="molecule type" value="Genomic_DNA"/>
</dbReference>
<dbReference type="PIR" id="C64874">
    <property type="entry name" value="NNEC1"/>
</dbReference>
<dbReference type="RefSeq" id="NP_415780.1">
    <property type="nucleotide sequence ID" value="NC_000913.3"/>
</dbReference>
<dbReference type="RefSeq" id="WP_001194582.1">
    <property type="nucleotide sequence ID" value="NZ_SSZK01000031.1"/>
</dbReference>
<dbReference type="SMR" id="P00895"/>
<dbReference type="BioGRID" id="4260124">
    <property type="interactions" value="36"/>
</dbReference>
<dbReference type="BioGRID" id="850213">
    <property type="interactions" value="4"/>
</dbReference>
<dbReference type="ComplexPortal" id="CPX-4783">
    <property type="entry name" value="Anthranilate synthase complex"/>
</dbReference>
<dbReference type="FunCoup" id="P00895">
    <property type="interactions" value="588"/>
</dbReference>
<dbReference type="IntAct" id="P00895">
    <property type="interactions" value="25"/>
</dbReference>
<dbReference type="STRING" id="511145.b1264"/>
<dbReference type="jPOST" id="P00895"/>
<dbReference type="PaxDb" id="511145-b1264"/>
<dbReference type="EnsemblBacteria" id="AAC74346">
    <property type="protein sequence ID" value="AAC74346"/>
    <property type="gene ID" value="b1264"/>
</dbReference>
<dbReference type="GeneID" id="945846"/>
<dbReference type="KEGG" id="ecj:JW1256"/>
<dbReference type="KEGG" id="eco:b1264"/>
<dbReference type="KEGG" id="ecoc:C3026_07415"/>
<dbReference type="PATRIC" id="fig|1411691.4.peg.1019"/>
<dbReference type="EchoBASE" id="EB1021"/>
<dbReference type="eggNOG" id="COG0147">
    <property type="taxonomic scope" value="Bacteria"/>
</dbReference>
<dbReference type="HOGENOM" id="CLU_006493_9_4_6"/>
<dbReference type="InParanoid" id="P00895"/>
<dbReference type="OMA" id="AMQLIYQ"/>
<dbReference type="OrthoDB" id="9803598at2"/>
<dbReference type="PhylomeDB" id="P00895"/>
<dbReference type="BioCyc" id="EcoCyc:ANTHRANSYNCOMPI-MONOMER"/>
<dbReference type="BioCyc" id="MetaCyc:ANTHRANSYNCOMPI-MONOMER"/>
<dbReference type="SABIO-RK" id="P00895"/>
<dbReference type="STRENDA-DB" id="LER9X6">
    <property type="experiment" value="Glutamine-dependent formation of anthranilate by anthranilate synthase from E. coli"/>
</dbReference>
<dbReference type="UniPathway" id="UPA00035">
    <property type="reaction ID" value="UER00040"/>
</dbReference>
<dbReference type="PRO" id="PR:P00895"/>
<dbReference type="Proteomes" id="UP000000625">
    <property type="component" value="Chromosome"/>
</dbReference>
<dbReference type="GO" id="GO:0005950">
    <property type="term" value="C:anthranilate synthase complex"/>
    <property type="evidence" value="ECO:0000303"/>
    <property type="project" value="ComplexPortal"/>
</dbReference>
<dbReference type="GO" id="GO:0004049">
    <property type="term" value="F:anthranilate synthase activity"/>
    <property type="evidence" value="ECO:0000314"/>
    <property type="project" value="EcoCyc"/>
</dbReference>
<dbReference type="GO" id="GO:0046872">
    <property type="term" value="F:metal ion binding"/>
    <property type="evidence" value="ECO:0007669"/>
    <property type="project" value="UniProtKB-KW"/>
</dbReference>
<dbReference type="GO" id="GO:0000162">
    <property type="term" value="P:L-tryptophan biosynthetic process"/>
    <property type="evidence" value="ECO:0000314"/>
    <property type="project" value="EcoCyc"/>
</dbReference>
<dbReference type="FunFam" id="3.60.120.10:FF:000006">
    <property type="entry name" value="Anthranilate synthase component 1"/>
    <property type="match status" value="1"/>
</dbReference>
<dbReference type="Gene3D" id="3.60.120.10">
    <property type="entry name" value="Anthranilate synthase"/>
    <property type="match status" value="1"/>
</dbReference>
<dbReference type="InterPro" id="IPR005801">
    <property type="entry name" value="ADC_synthase"/>
</dbReference>
<dbReference type="InterPro" id="IPR019999">
    <property type="entry name" value="Anth_synth_I-like"/>
</dbReference>
<dbReference type="InterPro" id="IPR006805">
    <property type="entry name" value="Anth_synth_I_N"/>
</dbReference>
<dbReference type="InterPro" id="IPR005257">
    <property type="entry name" value="Anth_synth_I_TrpE"/>
</dbReference>
<dbReference type="InterPro" id="IPR015890">
    <property type="entry name" value="Chorismate_C"/>
</dbReference>
<dbReference type="NCBIfam" id="NF010079">
    <property type="entry name" value="PRK13564.1"/>
    <property type="match status" value="1"/>
</dbReference>
<dbReference type="NCBIfam" id="TIGR00565">
    <property type="entry name" value="trpE_proteo"/>
    <property type="match status" value="1"/>
</dbReference>
<dbReference type="PANTHER" id="PTHR11236">
    <property type="entry name" value="AMINOBENZOATE/ANTHRANILATE SYNTHASE"/>
    <property type="match status" value="1"/>
</dbReference>
<dbReference type="PANTHER" id="PTHR11236:SF49">
    <property type="entry name" value="ANTHRANILATE SYNTHASE COMPONENT 1"/>
    <property type="match status" value="1"/>
</dbReference>
<dbReference type="Pfam" id="PF04715">
    <property type="entry name" value="Anth_synt_I_N"/>
    <property type="match status" value="1"/>
</dbReference>
<dbReference type="Pfam" id="PF00425">
    <property type="entry name" value="Chorismate_bind"/>
    <property type="match status" value="1"/>
</dbReference>
<dbReference type="PIRSF" id="PIRSF001373">
    <property type="entry name" value="TrpE"/>
    <property type="match status" value="1"/>
</dbReference>
<dbReference type="PRINTS" id="PR00095">
    <property type="entry name" value="ANTSNTHASEI"/>
</dbReference>
<dbReference type="SUPFAM" id="SSF56322">
    <property type="entry name" value="ADC synthase"/>
    <property type="match status" value="1"/>
</dbReference>
<organism>
    <name type="scientific">Escherichia coli (strain K12)</name>
    <dbReference type="NCBI Taxonomy" id="83333"/>
    <lineage>
        <taxon>Bacteria</taxon>
        <taxon>Pseudomonadati</taxon>
        <taxon>Pseudomonadota</taxon>
        <taxon>Gammaproteobacteria</taxon>
        <taxon>Enterobacterales</taxon>
        <taxon>Enterobacteriaceae</taxon>
        <taxon>Escherichia</taxon>
    </lineage>
</organism>
<keyword id="KW-0021">Allosteric enzyme</keyword>
<keyword id="KW-0028">Amino-acid biosynthesis</keyword>
<keyword id="KW-0057">Aromatic amino acid biosynthesis</keyword>
<keyword id="KW-0903">Direct protein sequencing</keyword>
<keyword id="KW-0456">Lyase</keyword>
<keyword id="KW-0460">Magnesium</keyword>
<keyword id="KW-0479">Metal-binding</keyword>
<keyword id="KW-1185">Reference proteome</keyword>
<keyword id="KW-0822">Tryptophan biosynthesis</keyword>
<gene>
    <name type="primary">trpE</name>
    <name type="ordered locus">b1264</name>
    <name type="ordered locus">JW1256</name>
</gene>
<reference key="1">
    <citation type="journal article" date="1981" name="Nucleic Acids Res.">
        <title>The complete nucleotide sequence of the tryptophan operon of Escherichia coli.</title>
        <authorList>
            <person name="Yanofsky C."/>
            <person name="Platt T."/>
            <person name="Crawford I.P."/>
            <person name="Nichols B.P."/>
            <person name="Christie G.E."/>
            <person name="Horowitz H."/>
            <person name="van Cleemput M."/>
            <person name="Wu A.M."/>
        </authorList>
    </citation>
    <scope>NUCLEOTIDE SEQUENCE [GENOMIC DNA]</scope>
</reference>
<reference key="2">
    <citation type="journal article" date="1981" name="J. Mol. Biol.">
        <title>Nucleotide sequence of Escherichia coli trpE. Anthranilate synthetase component I contains no tryptophan residues.</title>
        <authorList>
            <person name="Nichols B.P."/>
            <person name="van Cleemput M."/>
            <person name="Yanofsky C."/>
        </authorList>
    </citation>
    <scope>NUCLEOTIDE SEQUENCE [GENOMIC DNA]</scope>
</reference>
<reference key="3">
    <citation type="journal article" date="1996" name="DNA Res.">
        <title>A 570-kb DNA sequence of the Escherichia coli K-12 genome corresponding to the 28.0-40.1 min region on the linkage map.</title>
        <authorList>
            <person name="Aiba H."/>
            <person name="Baba T."/>
            <person name="Fujita K."/>
            <person name="Hayashi K."/>
            <person name="Inada T."/>
            <person name="Isono K."/>
            <person name="Itoh T."/>
            <person name="Kasai H."/>
            <person name="Kashimoto K."/>
            <person name="Kimura S."/>
            <person name="Kitakawa M."/>
            <person name="Kitagawa M."/>
            <person name="Makino K."/>
            <person name="Miki T."/>
            <person name="Mizobuchi K."/>
            <person name="Mori H."/>
            <person name="Mori T."/>
            <person name="Motomura K."/>
            <person name="Nakade S."/>
            <person name="Nakamura Y."/>
            <person name="Nashimoto H."/>
            <person name="Nishio Y."/>
            <person name="Oshima T."/>
            <person name="Saito N."/>
            <person name="Sampei G."/>
            <person name="Seki Y."/>
            <person name="Sivasundaram S."/>
            <person name="Tagami H."/>
            <person name="Takeda J."/>
            <person name="Takemoto K."/>
            <person name="Takeuchi Y."/>
            <person name="Wada C."/>
            <person name="Yamamoto Y."/>
            <person name="Horiuchi T."/>
        </authorList>
    </citation>
    <scope>NUCLEOTIDE SEQUENCE [LARGE SCALE GENOMIC DNA]</scope>
    <source>
        <strain>K12 / W3110 / ATCC 27325 / DSM 5911</strain>
    </source>
</reference>
<reference key="4">
    <citation type="journal article" date="1997" name="Science">
        <title>The complete genome sequence of Escherichia coli K-12.</title>
        <authorList>
            <person name="Blattner F.R."/>
            <person name="Plunkett G. III"/>
            <person name="Bloch C.A."/>
            <person name="Perna N.T."/>
            <person name="Burland V."/>
            <person name="Riley M."/>
            <person name="Collado-Vides J."/>
            <person name="Glasner J.D."/>
            <person name="Rode C.K."/>
            <person name="Mayhew G.F."/>
            <person name="Gregor J."/>
            <person name="Davis N.W."/>
            <person name="Kirkpatrick H.A."/>
            <person name="Goeden M.A."/>
            <person name="Rose D.J."/>
            <person name="Mau B."/>
            <person name="Shao Y."/>
        </authorList>
    </citation>
    <scope>NUCLEOTIDE SEQUENCE [LARGE SCALE GENOMIC DNA]</scope>
    <source>
        <strain>K12 / MG1655 / ATCC 47076</strain>
    </source>
</reference>
<reference key="5">
    <citation type="journal article" date="2006" name="Mol. Syst. Biol.">
        <title>Highly accurate genome sequences of Escherichia coli K-12 strains MG1655 and W3110.</title>
        <authorList>
            <person name="Hayashi K."/>
            <person name="Morooka N."/>
            <person name="Yamamoto Y."/>
            <person name="Fujita K."/>
            <person name="Isono K."/>
            <person name="Choi S."/>
            <person name="Ohtsubo E."/>
            <person name="Baba T."/>
            <person name="Wanner B.L."/>
            <person name="Mori H."/>
            <person name="Horiuchi T."/>
        </authorList>
    </citation>
    <scope>NUCLEOTIDE SEQUENCE [LARGE SCALE GENOMIC DNA]</scope>
    <source>
        <strain>K12 / W3110 / ATCC 27325 / DSM 5911</strain>
    </source>
</reference>
<reference key="6">
    <citation type="journal article" date="1978" name="J. Mol. Biol.">
        <title>Comparison of the nucleotide sequences of the initial transcribed regions of the tryptophan operons of Escherichia coli and Salmonella typhimurium.</title>
        <authorList>
            <person name="Lee F."/>
            <person name="Bertrand K."/>
            <person name="Bennett G.N."/>
            <person name="Yanofsky C."/>
        </authorList>
    </citation>
    <scope>NUCLEOTIDE SEQUENCE [GENOMIC DNA] OF 1-33</scope>
</reference>
<reference key="7">
    <citation type="journal article" date="1974" name="Biochemistry">
        <title>Separation of anthranilate synthetase components I and II of Escherichia coli, Salmonella typhimurium, and Serratia marcescens and determination of their amino-terminal sequences by automatic Edman degradation.</title>
        <authorList>
            <person name="Li S.-L."/>
            <person name="Hanlon J."/>
            <person name="Yanofsky C."/>
        </authorList>
    </citation>
    <scope>PROTEIN SEQUENCE OF 1-25</scope>
    <source>
        <strain>TRPA2/COLVB</strain>
    </source>
</reference>
<reference key="8">
    <citation type="journal article" date="1966" name="J. Biol. Chem.">
        <title>Anthranilate synthetase. Partial purification and some kinetic studies on the enzyme from Escherichia coli.</title>
        <authorList>
            <person name="Baker T.I."/>
            <person name="Crawford I.P."/>
        </authorList>
    </citation>
    <scope>FUNCTION</scope>
    <scope>BIOPHYSICOCHEMICAL PROPERTIES</scope>
    <scope>ACTIVITY REGULATION</scope>
</reference>
<reference key="9">
    <citation type="journal article" date="1969" name="J. Bacteriol.">
        <title>Anthranilate synthetase, an enzyme specified by the tryptophan operon of Escherichia coli: purification and characterization of component I.</title>
        <authorList>
            <person name="Ito J."/>
            <person name="Cox E.C."/>
            <person name="Yanofsky C."/>
        </authorList>
    </citation>
    <scope>FUNCTION</scope>
    <scope>CATALYTIC ACTIVITY</scope>
    <scope>BIOPHYSICOCHEMICAL PROPERTIES</scope>
    <scope>ACTIVITY REGULATION</scope>
</reference>
<reference key="10">
    <citation type="journal article" date="1973" name="J. Biol. Chem.">
        <title>Feedback regulation in the anthranilate aggregate from wild type and mutant strains of Escherichia coli.</title>
        <authorList>
            <person name="Pabst M.J."/>
            <person name="Kuhn J.C."/>
            <person name="Somerville R.L."/>
        </authorList>
    </citation>
    <scope>FUNCTION</scope>
    <scope>BIOPHYSICOCHEMICAL PROPERTIES</scope>
    <scope>ACTIVITY REGULATION</scope>
</reference>
<reference key="11">
    <citation type="journal article" date="1997" name="Electrophoresis">
        <title>Escherichia coli proteome analysis using the gene-protein database.</title>
        <authorList>
            <person name="VanBogelen R.A."/>
            <person name="Abshire K.Z."/>
            <person name="Moldover B."/>
            <person name="Olson E.R."/>
            <person name="Neidhardt F.C."/>
        </authorList>
    </citation>
    <scope>IDENTIFICATION BY 2D-GEL</scope>
</reference>
<feature type="chain" id="PRO_0000154092" description="Anthranilate synthase component 1">
    <location>
        <begin position="1"/>
        <end position="520"/>
    </location>
</feature>
<feature type="binding site" evidence="2">
    <location>
        <position position="40"/>
    </location>
    <ligand>
        <name>L-tryptophan</name>
        <dbReference type="ChEBI" id="CHEBI:57912"/>
    </ligand>
</feature>
<feature type="binding site" evidence="2">
    <location>
        <begin position="291"/>
        <end position="293"/>
    </location>
    <ligand>
        <name>L-tryptophan</name>
        <dbReference type="ChEBI" id="CHEBI:57912"/>
    </ligand>
</feature>
<feature type="binding site" evidence="2">
    <location>
        <begin position="328"/>
        <end position="329"/>
    </location>
    <ligand>
        <name>chorismate</name>
        <dbReference type="ChEBI" id="CHEBI:29748"/>
    </ligand>
</feature>
<feature type="binding site" evidence="2">
    <location>
        <position position="361"/>
    </location>
    <ligand>
        <name>Mg(2+)</name>
        <dbReference type="ChEBI" id="CHEBI:18420"/>
    </ligand>
</feature>
<feature type="binding site" evidence="2">
    <location>
        <position position="449"/>
    </location>
    <ligand>
        <name>chorismate</name>
        <dbReference type="ChEBI" id="CHEBI:29748"/>
    </ligand>
</feature>
<feature type="binding site" evidence="2">
    <location>
        <position position="469"/>
    </location>
    <ligand>
        <name>chorismate</name>
        <dbReference type="ChEBI" id="CHEBI:29748"/>
    </ligand>
</feature>
<feature type="binding site" evidence="2">
    <location>
        <begin position="483"/>
        <end position="485"/>
    </location>
    <ligand>
        <name>chorismate</name>
        <dbReference type="ChEBI" id="CHEBI:29748"/>
    </ligand>
</feature>
<feature type="binding site" evidence="2">
    <location>
        <position position="485"/>
    </location>
    <ligand>
        <name>chorismate</name>
        <dbReference type="ChEBI" id="CHEBI:29748"/>
    </ligand>
</feature>
<feature type="binding site" evidence="2">
    <location>
        <position position="498"/>
    </location>
    <ligand>
        <name>Mg(2+)</name>
        <dbReference type="ChEBI" id="CHEBI:18420"/>
    </ligand>
</feature>
<feature type="sequence variant" description="In strain: TRPA2/COLVB.">
    <original>C</original>
    <variation>S</variation>
    <location>
        <position position="13"/>
    </location>
</feature>
<feature type="sequence conflict" description="In Ref. 1; CAA23666 and 2; CAA23671." evidence="6" ref="1 2">
    <original>G</original>
    <variation>S</variation>
    <location>
        <position position="147"/>
    </location>
</feature>
<accession>P00895</accession>
<accession>P78249</accession>
<evidence type="ECO:0000250" key="1"/>
<evidence type="ECO:0000250" key="2">
    <source>
        <dbReference type="UniProtKB" id="P00897"/>
    </source>
</evidence>
<evidence type="ECO:0000269" key="3">
    <source>
    </source>
</evidence>
<evidence type="ECO:0000269" key="4">
    <source>
    </source>
</evidence>
<evidence type="ECO:0000269" key="5">
    <source>
    </source>
</evidence>
<evidence type="ECO:0000305" key="6"/>
<sequence>MQTQKPTLELLTCEGAYRDNPTALFHQLCGDRPATLLLESADIDSKDDLKSLLLVDSALRITALGDTVTIQALSGNGEALLALLDNALPAGVESEQSPNCRVLRFPPVSPLLDEDARLCSLSVFDAFRLLQNLLNVPKEEREAMFFGGLFSYDLVAGFEDLPQLSAENNCPDFCFYLAETLMVIDHQKKSTRIQASLFAPNEEEKQRLTARLNELRQQLTEAAPPLPVVSVPHMRCECNQSDEEFGGVVRLLQKAIRAGEIFQVVPSRRFSLPCPSPLAAYYVLKKSNPSPYMFFMQDNDFTLFGASPESSLKYDATSRQIEIYPIAGTRPRGRRADGSLDRDLDSRIELEMRTDHKELSEHLMLVDLARNDLARICTPGSRYVADLTKVDRYSYVMHLVSRVVGELRHDLDALHAYRACMNMGTLSGAPKVRAMQLIAEAEGRRRGSYGGAVGYFTAHGDLDTCIVIRSALVENGIATVQAGAGVVLDSVPQSEADETRNKARAVLRAIATAHHAQETF</sequence>
<comment type="function">
    <text evidence="3 4 5">Part of a heterotetrameric complex that catalyzes the two-step biosynthesis of anthranilate, an intermediate in the biosynthesis of L-tryptophan. In the first step, the glutamine-binding beta subunit (TrpG) of anthranilate synthase (AS) provides the glutamine amidotransferase activity which generates ammonia as a substrate that, along with chorismate, is used in the second step, catalyzed by the large alpha subunit of AS (TrpE) to produce anthranilate. In the absence of TrpG, TrpE can synthesize anthranilate directly from chorismate and high concentrations of ammonia.</text>
</comment>
<comment type="catalytic activity">
    <reaction evidence="4">
        <text>chorismate + L-glutamine = anthranilate + pyruvate + L-glutamate + H(+)</text>
        <dbReference type="Rhea" id="RHEA:21732"/>
        <dbReference type="ChEBI" id="CHEBI:15361"/>
        <dbReference type="ChEBI" id="CHEBI:15378"/>
        <dbReference type="ChEBI" id="CHEBI:16567"/>
        <dbReference type="ChEBI" id="CHEBI:29748"/>
        <dbReference type="ChEBI" id="CHEBI:29985"/>
        <dbReference type="ChEBI" id="CHEBI:58359"/>
        <dbReference type="EC" id="4.1.3.27"/>
    </reaction>
</comment>
<comment type="cofactor">
    <cofactor evidence="2">
        <name>Mg(2+)</name>
        <dbReference type="ChEBI" id="CHEBI:18420"/>
    </cofactor>
    <text evidence="2">Binds 1 Mg(2+) ion per subunit.</text>
</comment>
<comment type="activity regulation">
    <text evidence="3 4 5">Cooperatively feedback inhibited by tryptophan.</text>
</comment>
<comment type="biophysicochemical properties">
    <kinetics>
        <KM evidence="3 4 5">1.2 uM for chorismate (at pH 7.5)</KM>
        <KM evidence="3 4 5">15 mM for ammonia (at 37 degrees Celsius and at pH 7.6)</KM>
    </kinetics>
    <phDependence>
        <text evidence="3 4 5">Optimum pH is between 7.2 and 7.8.</text>
    </phDependence>
</comment>
<comment type="pathway">
    <text>Amino-acid biosynthesis; L-tryptophan biosynthesis; L-tryptophan from chorismate: step 1/5.</text>
</comment>
<comment type="subunit">
    <text evidence="1">Heterotetramer consisting of two non-identical subunits: a beta subunit (TrpG) and a large lpha subunit (TrpE).</text>
</comment>
<comment type="similarity">
    <text evidence="6">Belongs to the anthranilate synthase component I family.</text>
</comment>